<proteinExistence type="evidence at protein level"/>
<sequence>MGSLQAMRRAQRAQGPATIMAVGTSNPPNLYEQTSYPDFYFRVTNSDHKHALKNKFRVICEKTKVKRRYLHLTEEILKQRPKLCSYMEPSFDDRQDIVVEEIPKLAKEAAEKAIKEWGRPKSEITHLVFCSISGIDMPGADYRLATLLGLPLSVNRLMLYSQACHMGAQMLRIAKDLAENNRGARVLAVSCEITVLSFRGPDAGDFEALACQAGFGDGAAAVVVGADPLPGVERPIYEIAAAMQETVPESERAVGGHLREIGWTFHFFNQLPKLIAENIEGSLARAFKPLGISEWNDVFWVAHPGNWGIMDAIETKLGLEQGKLATARHVFSEYGNMQSATVYFVMDEVRKRSAAEGRATTGEGLEWGVLFGFGPGLTIETVVLRSVPLP</sequence>
<evidence type="ECO:0000250" key="1"/>
<evidence type="ECO:0000269" key="2">
    <source>
    </source>
</evidence>
<evidence type="ECO:0000305" key="3"/>
<name>CURS3_CURLO</name>
<dbReference type="EC" id="2.3.1.217"/>
<dbReference type="EC" id="2.3.1.219"/>
<dbReference type="EMBL" id="AB506763">
    <property type="protein sequence ID" value="BAH85781.1"/>
    <property type="molecule type" value="mRNA"/>
</dbReference>
<dbReference type="SMR" id="C6L7V9"/>
<dbReference type="KEGG" id="ag:BAH85781"/>
<dbReference type="BioCyc" id="MetaCyc:MONOMER-15411"/>
<dbReference type="BRENDA" id="2.3.1.217">
    <property type="organism ID" value="9125"/>
</dbReference>
<dbReference type="BRENDA" id="2.3.1.219">
    <property type="organism ID" value="9125"/>
</dbReference>
<dbReference type="UniPathway" id="UPA00154"/>
<dbReference type="GO" id="GO:0016747">
    <property type="term" value="F:acyltransferase activity, transferring groups other than amino-acyl groups"/>
    <property type="evidence" value="ECO:0000314"/>
    <property type="project" value="UniProtKB"/>
</dbReference>
<dbReference type="GO" id="GO:0102106">
    <property type="term" value="F:curcumin synthase activity"/>
    <property type="evidence" value="ECO:0007669"/>
    <property type="project" value="UniProtKB-EC"/>
</dbReference>
<dbReference type="GO" id="GO:0102103">
    <property type="term" value="F:demethoxycurcumin synthase activity"/>
    <property type="evidence" value="ECO:0007669"/>
    <property type="project" value="UniProtKB-EC"/>
</dbReference>
<dbReference type="GO" id="GO:0009813">
    <property type="term" value="P:flavonoid biosynthetic process"/>
    <property type="evidence" value="ECO:0000314"/>
    <property type="project" value="UniProtKB"/>
</dbReference>
<dbReference type="GO" id="GO:0030639">
    <property type="term" value="P:polyketide biosynthetic process"/>
    <property type="evidence" value="ECO:0007669"/>
    <property type="project" value="TreeGrafter"/>
</dbReference>
<dbReference type="CDD" id="cd00831">
    <property type="entry name" value="CHS_like"/>
    <property type="match status" value="1"/>
</dbReference>
<dbReference type="FunFam" id="3.40.47.10:FF:000014">
    <property type="entry name" value="Chalcone synthase 1"/>
    <property type="match status" value="1"/>
</dbReference>
<dbReference type="FunFam" id="3.40.47.10:FF:000025">
    <property type="entry name" value="Chalcone synthase 2"/>
    <property type="match status" value="1"/>
</dbReference>
<dbReference type="Gene3D" id="3.40.47.10">
    <property type="match status" value="2"/>
</dbReference>
<dbReference type="InterPro" id="IPR012328">
    <property type="entry name" value="Chalcone/stilbene_synt_C"/>
</dbReference>
<dbReference type="InterPro" id="IPR001099">
    <property type="entry name" value="Chalcone/stilbene_synt_N"/>
</dbReference>
<dbReference type="InterPro" id="IPR011141">
    <property type="entry name" value="Polyketide_synthase_type-III"/>
</dbReference>
<dbReference type="InterPro" id="IPR016039">
    <property type="entry name" value="Thiolase-like"/>
</dbReference>
<dbReference type="PANTHER" id="PTHR11877:SF105">
    <property type="entry name" value="CHALCONE SYNTHASE"/>
    <property type="match status" value="1"/>
</dbReference>
<dbReference type="PANTHER" id="PTHR11877">
    <property type="entry name" value="HYDROXYMETHYLGLUTARYL-COA SYNTHASE"/>
    <property type="match status" value="1"/>
</dbReference>
<dbReference type="Pfam" id="PF02797">
    <property type="entry name" value="Chal_sti_synt_C"/>
    <property type="match status" value="1"/>
</dbReference>
<dbReference type="Pfam" id="PF00195">
    <property type="entry name" value="Chal_sti_synt_N"/>
    <property type="match status" value="1"/>
</dbReference>
<dbReference type="PIRSF" id="PIRSF000451">
    <property type="entry name" value="PKS_III"/>
    <property type="match status" value="1"/>
</dbReference>
<dbReference type="SUPFAM" id="SSF53901">
    <property type="entry name" value="Thiolase-like"/>
    <property type="match status" value="2"/>
</dbReference>
<reference key="1">
    <citation type="journal article" date="2009" name="FEBS Lett.">
        <title>Identification and characterization of multiple curcumin synthases from the herb Curcuma longa.</title>
        <authorList>
            <person name="Katsuyama Y."/>
            <person name="Kita T."/>
            <person name="Horinouchi S."/>
        </authorList>
    </citation>
    <scope>NUCLEOTIDE SEQUENCE [MRNA]</scope>
    <scope>FUNCTION</scope>
    <scope>CATALYTIC ACTIVITY</scope>
    <scope>PATHWAY</scope>
    <scope>BIOPHYSICOCHEMICAL PROPERTIES</scope>
</reference>
<accession>C6L7V9</accession>
<organism>
    <name type="scientific">Curcuma longa</name>
    <name type="common">Turmeric</name>
    <name type="synonym">Curcuma domestica</name>
    <dbReference type="NCBI Taxonomy" id="136217"/>
    <lineage>
        <taxon>Eukaryota</taxon>
        <taxon>Viridiplantae</taxon>
        <taxon>Streptophyta</taxon>
        <taxon>Embryophyta</taxon>
        <taxon>Tracheophyta</taxon>
        <taxon>Spermatophyta</taxon>
        <taxon>Magnoliopsida</taxon>
        <taxon>Liliopsida</taxon>
        <taxon>Zingiberales</taxon>
        <taxon>Zingiberaceae</taxon>
        <taxon>Curcuma</taxon>
    </lineage>
</organism>
<gene>
    <name type="primary">CURS3</name>
</gene>
<protein>
    <recommendedName>
        <fullName>Curcumin synthase 3</fullName>
        <ecNumber>2.3.1.217</ecNumber>
    </recommendedName>
    <alternativeName>
        <fullName>Demethoxycurcumin synthase</fullName>
        <ecNumber>2.3.1.219</ecNumber>
    </alternativeName>
</protein>
<comment type="function">
    <text evidence="2">Catalyzes the synthesis of curcumin by condensing feruloyl-CoA with a diketide-CoA in the curcuminoid biosynthesis. Also acts as a demethoxycurcumin synthase by accepting 4-coumaroyl-CoA as a starter substrate instead of feruloyl-CoA.</text>
</comment>
<comment type="catalytic activity">
    <reaction evidence="2">
        <text>(E)-feruloylacetyl-CoA + (E)-feruloyl-CoA + H2O = curcumin + CO2 + 2 CoA</text>
        <dbReference type="Rhea" id="RHEA:34823"/>
        <dbReference type="ChEBI" id="CHEBI:3962"/>
        <dbReference type="ChEBI" id="CHEBI:15377"/>
        <dbReference type="ChEBI" id="CHEBI:16526"/>
        <dbReference type="ChEBI" id="CHEBI:57287"/>
        <dbReference type="ChEBI" id="CHEBI:87305"/>
        <dbReference type="ChEBI" id="CHEBI:142389"/>
        <dbReference type="EC" id="2.3.1.217"/>
    </reaction>
</comment>
<comment type="catalytic activity">
    <reaction evidence="2">
        <text>(E)-feruloylacetyl-CoA + (E)-4-coumaroyl-CoA + H2O = demethoxycurcumin + CO2 + 2 CoA</text>
        <dbReference type="Rhea" id="RHEA:35139"/>
        <dbReference type="ChEBI" id="CHEBI:15377"/>
        <dbReference type="ChEBI" id="CHEBI:16526"/>
        <dbReference type="ChEBI" id="CHEBI:57287"/>
        <dbReference type="ChEBI" id="CHEBI:65737"/>
        <dbReference type="ChEBI" id="CHEBI:85008"/>
        <dbReference type="ChEBI" id="CHEBI:142389"/>
        <dbReference type="EC" id="2.3.1.219"/>
    </reaction>
</comment>
<comment type="catalytic activity">
    <reaction evidence="2">
        <text>(4-coumaroyl)acetyl-CoA + 4-coumaroyl-CoA + H2O = bisdemethoxycurcumin + CO2 + 2 CoA</text>
        <dbReference type="Rhea" id="RHEA:35119"/>
        <dbReference type="ChEBI" id="CHEBI:15377"/>
        <dbReference type="ChEBI" id="CHEBI:16526"/>
        <dbReference type="ChEBI" id="CHEBI:57287"/>
        <dbReference type="ChEBI" id="CHEBI:57355"/>
        <dbReference type="ChEBI" id="CHEBI:71045"/>
        <dbReference type="ChEBI" id="CHEBI:71211"/>
        <dbReference type="EC" id="2.3.1.219"/>
    </reaction>
</comment>
<comment type="biophysicochemical properties">
    <kinetics>
        <KM evidence="2">2.2 uM for feruloyl-CoA</KM>
        <KM evidence="2">3.4 uM for p-coumaroyl-CoA</KM>
        <text>kcat is 0.19 min(-1) with feruloyl-CoA. kcat is 0.36 min(-1) with p-coumaroyl-CoA.</text>
    </kinetics>
    <phDependence>
        <text evidence="2">Optimum pH is 8.0.</text>
    </phDependence>
    <temperatureDependence>
        <text evidence="2">Optimum temperature is 45-55 degrees Celsius.</text>
    </temperatureDependence>
</comment>
<comment type="pathway">
    <text evidence="2">Secondary metabolite biosynthesis; flavonoid biosynthesis.</text>
</comment>
<comment type="subunit">
    <text evidence="1">Homodimer.</text>
</comment>
<comment type="similarity">
    <text evidence="3">Belongs to the thiolase-like superfamily. Chalcone/stilbene synthases family.</text>
</comment>
<keyword id="KW-0012">Acyltransferase</keyword>
<keyword id="KW-0284">Flavonoid biosynthesis</keyword>
<keyword id="KW-0808">Transferase</keyword>
<feature type="chain" id="PRO_0000422573" description="Curcumin synthase 3">
    <location>
        <begin position="1"/>
        <end position="390"/>
    </location>
</feature>
<feature type="active site" evidence="1">
    <location>
        <position position="164"/>
    </location>
</feature>